<gene>
    <name evidence="1" type="primary">rpsM</name>
    <name type="ordered locus">gbs0082</name>
</gene>
<keyword id="KW-0687">Ribonucleoprotein</keyword>
<keyword id="KW-0689">Ribosomal protein</keyword>
<keyword id="KW-0694">RNA-binding</keyword>
<keyword id="KW-0699">rRNA-binding</keyword>
<keyword id="KW-0820">tRNA-binding</keyword>
<feature type="chain" id="PRO_0000132144" description="Small ribosomal subunit protein uS13">
    <location>
        <begin position="1"/>
        <end position="121"/>
    </location>
</feature>
<feature type="region of interest" description="Disordered" evidence="2">
    <location>
        <begin position="96"/>
        <end position="121"/>
    </location>
</feature>
<feature type="compositionally biased region" description="Basic residues" evidence="2">
    <location>
        <begin position="106"/>
        <end position="121"/>
    </location>
</feature>
<sequence>MARIAGVDIPNDKRVVISLTYVYGIGLSTSKKILAAAGISEDIRVKDLTPDQEDAIRREVDAIKVEGDLRREVNLNIKRLMEIGSYRGIRHRRGLPVRGQNTKNNARTRKGKAVAIAGKKK</sequence>
<organism>
    <name type="scientific">Streptococcus agalactiae serotype III (strain NEM316)</name>
    <dbReference type="NCBI Taxonomy" id="211110"/>
    <lineage>
        <taxon>Bacteria</taxon>
        <taxon>Bacillati</taxon>
        <taxon>Bacillota</taxon>
        <taxon>Bacilli</taxon>
        <taxon>Lactobacillales</taxon>
        <taxon>Streptococcaceae</taxon>
        <taxon>Streptococcus</taxon>
    </lineage>
</organism>
<dbReference type="EMBL" id="AL766843">
    <property type="protein sequence ID" value="CAD45727.1"/>
    <property type="molecule type" value="Genomic_DNA"/>
</dbReference>
<dbReference type="RefSeq" id="WP_000090785.1">
    <property type="nucleotide sequence ID" value="NC_004368.1"/>
</dbReference>
<dbReference type="SMR" id="P66390"/>
<dbReference type="GeneID" id="66885042"/>
<dbReference type="KEGG" id="san:rpsM"/>
<dbReference type="eggNOG" id="COG0099">
    <property type="taxonomic scope" value="Bacteria"/>
</dbReference>
<dbReference type="HOGENOM" id="CLU_103849_1_1_9"/>
<dbReference type="Proteomes" id="UP000000823">
    <property type="component" value="Chromosome"/>
</dbReference>
<dbReference type="GO" id="GO:0005829">
    <property type="term" value="C:cytosol"/>
    <property type="evidence" value="ECO:0007669"/>
    <property type="project" value="TreeGrafter"/>
</dbReference>
<dbReference type="GO" id="GO:0015935">
    <property type="term" value="C:small ribosomal subunit"/>
    <property type="evidence" value="ECO:0007669"/>
    <property type="project" value="TreeGrafter"/>
</dbReference>
<dbReference type="GO" id="GO:0019843">
    <property type="term" value="F:rRNA binding"/>
    <property type="evidence" value="ECO:0007669"/>
    <property type="project" value="UniProtKB-UniRule"/>
</dbReference>
<dbReference type="GO" id="GO:0003735">
    <property type="term" value="F:structural constituent of ribosome"/>
    <property type="evidence" value="ECO:0007669"/>
    <property type="project" value="InterPro"/>
</dbReference>
<dbReference type="GO" id="GO:0000049">
    <property type="term" value="F:tRNA binding"/>
    <property type="evidence" value="ECO:0007669"/>
    <property type="project" value="UniProtKB-UniRule"/>
</dbReference>
<dbReference type="GO" id="GO:0006412">
    <property type="term" value="P:translation"/>
    <property type="evidence" value="ECO:0007669"/>
    <property type="project" value="UniProtKB-UniRule"/>
</dbReference>
<dbReference type="FunFam" id="1.10.8.50:FF:000001">
    <property type="entry name" value="30S ribosomal protein S13"/>
    <property type="match status" value="1"/>
</dbReference>
<dbReference type="FunFam" id="4.10.910.10:FF:000001">
    <property type="entry name" value="30S ribosomal protein S13"/>
    <property type="match status" value="1"/>
</dbReference>
<dbReference type="Gene3D" id="1.10.8.50">
    <property type="match status" value="1"/>
</dbReference>
<dbReference type="Gene3D" id="4.10.910.10">
    <property type="entry name" value="30s ribosomal protein s13, domain 2"/>
    <property type="match status" value="1"/>
</dbReference>
<dbReference type="HAMAP" id="MF_01315">
    <property type="entry name" value="Ribosomal_uS13"/>
    <property type="match status" value="1"/>
</dbReference>
<dbReference type="InterPro" id="IPR027437">
    <property type="entry name" value="Rbsml_uS13_C"/>
</dbReference>
<dbReference type="InterPro" id="IPR001892">
    <property type="entry name" value="Ribosomal_uS13"/>
</dbReference>
<dbReference type="InterPro" id="IPR010979">
    <property type="entry name" value="Ribosomal_uS13-like_H2TH"/>
</dbReference>
<dbReference type="InterPro" id="IPR019980">
    <property type="entry name" value="Ribosomal_uS13_bac-type"/>
</dbReference>
<dbReference type="InterPro" id="IPR018269">
    <property type="entry name" value="Ribosomal_uS13_CS"/>
</dbReference>
<dbReference type="NCBIfam" id="TIGR03631">
    <property type="entry name" value="uS13_bact"/>
    <property type="match status" value="1"/>
</dbReference>
<dbReference type="PANTHER" id="PTHR10871">
    <property type="entry name" value="30S RIBOSOMAL PROTEIN S13/40S RIBOSOMAL PROTEIN S18"/>
    <property type="match status" value="1"/>
</dbReference>
<dbReference type="PANTHER" id="PTHR10871:SF1">
    <property type="entry name" value="SMALL RIBOSOMAL SUBUNIT PROTEIN US13M"/>
    <property type="match status" value="1"/>
</dbReference>
<dbReference type="Pfam" id="PF00416">
    <property type="entry name" value="Ribosomal_S13"/>
    <property type="match status" value="1"/>
</dbReference>
<dbReference type="PIRSF" id="PIRSF002134">
    <property type="entry name" value="Ribosomal_S13"/>
    <property type="match status" value="1"/>
</dbReference>
<dbReference type="SUPFAM" id="SSF46946">
    <property type="entry name" value="S13-like H2TH domain"/>
    <property type="match status" value="1"/>
</dbReference>
<dbReference type="PROSITE" id="PS00646">
    <property type="entry name" value="RIBOSOMAL_S13_1"/>
    <property type="match status" value="1"/>
</dbReference>
<dbReference type="PROSITE" id="PS50159">
    <property type="entry name" value="RIBOSOMAL_S13_2"/>
    <property type="match status" value="1"/>
</dbReference>
<protein>
    <recommendedName>
        <fullName evidence="1">Small ribosomal subunit protein uS13</fullName>
    </recommendedName>
    <alternativeName>
        <fullName evidence="3">30S ribosomal protein S13</fullName>
    </alternativeName>
</protein>
<evidence type="ECO:0000255" key="1">
    <source>
        <dbReference type="HAMAP-Rule" id="MF_01315"/>
    </source>
</evidence>
<evidence type="ECO:0000256" key="2">
    <source>
        <dbReference type="SAM" id="MobiDB-lite"/>
    </source>
</evidence>
<evidence type="ECO:0000305" key="3"/>
<comment type="function">
    <text evidence="1">Located at the top of the head of the 30S subunit, it contacts several helices of the 16S rRNA. In the 70S ribosome it contacts the 23S rRNA (bridge B1a) and protein L5 of the 50S subunit (bridge B1b), connecting the 2 subunits; these bridges are implicated in subunit movement. Contacts the tRNAs in the A and P-sites.</text>
</comment>
<comment type="subunit">
    <text evidence="1">Part of the 30S ribosomal subunit. Forms a loose heterodimer with protein S19. Forms two bridges to the 50S subunit in the 70S ribosome.</text>
</comment>
<comment type="similarity">
    <text evidence="1">Belongs to the universal ribosomal protein uS13 family.</text>
</comment>
<proteinExistence type="inferred from homology"/>
<name>RS13_STRA3</name>
<reference key="1">
    <citation type="journal article" date="2002" name="Mol. Microbiol.">
        <title>Genome sequence of Streptococcus agalactiae, a pathogen causing invasive neonatal disease.</title>
        <authorList>
            <person name="Glaser P."/>
            <person name="Rusniok C."/>
            <person name="Buchrieser C."/>
            <person name="Chevalier F."/>
            <person name="Frangeul L."/>
            <person name="Msadek T."/>
            <person name="Zouine M."/>
            <person name="Couve E."/>
            <person name="Lalioui L."/>
            <person name="Poyart C."/>
            <person name="Trieu-Cuot P."/>
            <person name="Kunst F."/>
        </authorList>
    </citation>
    <scope>NUCLEOTIDE SEQUENCE [LARGE SCALE GENOMIC DNA]</scope>
    <source>
        <strain>NEM316</strain>
    </source>
</reference>
<accession>P66390</accession>
<accession>Q8E2B2</accession>
<accession>Q8E7R9</accession>